<protein>
    <recommendedName>
        <fullName evidence="1">Glutamate-1-semialdehyde 2,1-aminomutase</fullName>
        <shortName evidence="1">GSA</shortName>
        <ecNumber evidence="1">5.4.3.8</ecNumber>
    </recommendedName>
    <alternativeName>
        <fullName evidence="1">Glutamate-1-semialdehyde aminotransferase</fullName>
        <shortName evidence="1">GSA-AT</shortName>
    </alternativeName>
</protein>
<organism>
    <name type="scientific">Xanthomonas campestris pv. campestris (strain 8004)</name>
    <dbReference type="NCBI Taxonomy" id="314565"/>
    <lineage>
        <taxon>Bacteria</taxon>
        <taxon>Pseudomonadati</taxon>
        <taxon>Pseudomonadota</taxon>
        <taxon>Gammaproteobacteria</taxon>
        <taxon>Lysobacterales</taxon>
        <taxon>Lysobacteraceae</taxon>
        <taxon>Xanthomonas</taxon>
    </lineage>
</organism>
<evidence type="ECO:0000255" key="1">
    <source>
        <dbReference type="HAMAP-Rule" id="MF_00375"/>
    </source>
</evidence>
<keyword id="KW-0963">Cytoplasm</keyword>
<keyword id="KW-0413">Isomerase</keyword>
<keyword id="KW-0627">Porphyrin biosynthesis</keyword>
<keyword id="KW-0663">Pyridoxal phosphate</keyword>
<proteinExistence type="inferred from homology"/>
<reference key="1">
    <citation type="journal article" date="2005" name="Genome Res.">
        <title>Comparative and functional genomic analyses of the pathogenicity of phytopathogen Xanthomonas campestris pv. campestris.</title>
        <authorList>
            <person name="Qian W."/>
            <person name="Jia Y."/>
            <person name="Ren S.-X."/>
            <person name="He Y.-Q."/>
            <person name="Feng J.-X."/>
            <person name="Lu L.-F."/>
            <person name="Sun Q."/>
            <person name="Ying G."/>
            <person name="Tang D.-J."/>
            <person name="Tang H."/>
            <person name="Wu W."/>
            <person name="Hao P."/>
            <person name="Wang L."/>
            <person name="Jiang B.-L."/>
            <person name="Zeng S."/>
            <person name="Gu W.-Y."/>
            <person name="Lu G."/>
            <person name="Rong L."/>
            <person name="Tian Y."/>
            <person name="Yao Z."/>
            <person name="Fu G."/>
            <person name="Chen B."/>
            <person name="Fang R."/>
            <person name="Qiang B."/>
            <person name="Chen Z."/>
            <person name="Zhao G.-P."/>
            <person name="Tang J.-L."/>
            <person name="He C."/>
        </authorList>
    </citation>
    <scope>NUCLEOTIDE SEQUENCE [LARGE SCALE GENOMIC DNA]</scope>
    <source>
        <strain>8004</strain>
    </source>
</reference>
<accession>Q4UYA7</accession>
<sequence>MNHSRSHALFSQAQNLMPGGVNSPVRAFKSVGGEPFFVARADGAYLFDVDGNRYIDYVGSWGPMIAGHNHPAVREAVERAIRDGLSFGAPCEAEVTMAETITRLVPSCEMVRMVNSGTEATLSAIRLARGATGRNRIVKFEGCYHGHGDSFLVKAGSGMLTLGVPTSPGVPAGLSELTATLSFNDFEGATALFDEIGAEVAAVIIEPVVGNANCIPPQAGYLQHLRTLCTRHGALLIFDEVMTGFRVALGGAQAHYGVTPDLTTFGKIIGGGMPVGAYGGGRDLMEQISPAGPIYQAGTLSGNPVAMAAGLAMLQLVQEPGFHARLSETTSLLCEGLEDAARAAGVAVTTNQVGGMFGLFFTDQIVENYAQATACDVTTFNRFFHAMLQQGVYLAPSAYEAGFVSSAHDEAVIEATLAAAREAFADVMR</sequence>
<dbReference type="EC" id="5.4.3.8" evidence="1"/>
<dbReference type="EMBL" id="CP000050">
    <property type="protein sequence ID" value="AAY47966.1"/>
    <property type="molecule type" value="Genomic_DNA"/>
</dbReference>
<dbReference type="RefSeq" id="WP_011038374.1">
    <property type="nucleotide sequence ID" value="NZ_CP155948.1"/>
</dbReference>
<dbReference type="SMR" id="Q4UYA7"/>
<dbReference type="KEGG" id="xcb:XC_0892"/>
<dbReference type="HOGENOM" id="CLU_016922_1_5_6"/>
<dbReference type="UniPathway" id="UPA00251">
    <property type="reaction ID" value="UER00317"/>
</dbReference>
<dbReference type="PHI-base" id="PHI:3950"/>
<dbReference type="Proteomes" id="UP000000420">
    <property type="component" value="Chromosome"/>
</dbReference>
<dbReference type="GO" id="GO:0005737">
    <property type="term" value="C:cytoplasm"/>
    <property type="evidence" value="ECO:0007669"/>
    <property type="project" value="UniProtKB-SubCell"/>
</dbReference>
<dbReference type="GO" id="GO:0042286">
    <property type="term" value="F:glutamate-1-semialdehyde 2,1-aminomutase activity"/>
    <property type="evidence" value="ECO:0007669"/>
    <property type="project" value="UniProtKB-UniRule"/>
</dbReference>
<dbReference type="GO" id="GO:0030170">
    <property type="term" value="F:pyridoxal phosphate binding"/>
    <property type="evidence" value="ECO:0007669"/>
    <property type="project" value="InterPro"/>
</dbReference>
<dbReference type="GO" id="GO:0008483">
    <property type="term" value="F:transaminase activity"/>
    <property type="evidence" value="ECO:0007669"/>
    <property type="project" value="InterPro"/>
</dbReference>
<dbReference type="GO" id="GO:0006782">
    <property type="term" value="P:protoporphyrinogen IX biosynthetic process"/>
    <property type="evidence" value="ECO:0007669"/>
    <property type="project" value="UniProtKB-UniRule"/>
</dbReference>
<dbReference type="CDD" id="cd00610">
    <property type="entry name" value="OAT_like"/>
    <property type="match status" value="1"/>
</dbReference>
<dbReference type="FunFam" id="3.40.640.10:FF:000021">
    <property type="entry name" value="Glutamate-1-semialdehyde 2,1-aminomutase"/>
    <property type="match status" value="1"/>
</dbReference>
<dbReference type="Gene3D" id="3.90.1150.10">
    <property type="entry name" value="Aspartate Aminotransferase, domain 1"/>
    <property type="match status" value="1"/>
</dbReference>
<dbReference type="Gene3D" id="3.40.640.10">
    <property type="entry name" value="Type I PLP-dependent aspartate aminotransferase-like (Major domain)"/>
    <property type="match status" value="1"/>
</dbReference>
<dbReference type="HAMAP" id="MF_00375">
    <property type="entry name" value="HemL_aminotrans_3"/>
    <property type="match status" value="1"/>
</dbReference>
<dbReference type="InterPro" id="IPR004639">
    <property type="entry name" value="4pyrrol_synth_GluAld_NH2Trfase"/>
</dbReference>
<dbReference type="InterPro" id="IPR005814">
    <property type="entry name" value="Aminotrans_3"/>
</dbReference>
<dbReference type="InterPro" id="IPR049704">
    <property type="entry name" value="Aminotrans_3_PPA_site"/>
</dbReference>
<dbReference type="InterPro" id="IPR015424">
    <property type="entry name" value="PyrdxlP-dep_Trfase"/>
</dbReference>
<dbReference type="InterPro" id="IPR015421">
    <property type="entry name" value="PyrdxlP-dep_Trfase_major"/>
</dbReference>
<dbReference type="InterPro" id="IPR015422">
    <property type="entry name" value="PyrdxlP-dep_Trfase_small"/>
</dbReference>
<dbReference type="NCBIfam" id="TIGR00713">
    <property type="entry name" value="hemL"/>
    <property type="match status" value="1"/>
</dbReference>
<dbReference type="NCBIfam" id="NF000818">
    <property type="entry name" value="PRK00062.1"/>
    <property type="match status" value="1"/>
</dbReference>
<dbReference type="PANTHER" id="PTHR43713">
    <property type="entry name" value="GLUTAMATE-1-SEMIALDEHYDE 2,1-AMINOMUTASE"/>
    <property type="match status" value="1"/>
</dbReference>
<dbReference type="PANTHER" id="PTHR43713:SF3">
    <property type="entry name" value="GLUTAMATE-1-SEMIALDEHYDE 2,1-AMINOMUTASE 1, CHLOROPLASTIC-RELATED"/>
    <property type="match status" value="1"/>
</dbReference>
<dbReference type="Pfam" id="PF00202">
    <property type="entry name" value="Aminotran_3"/>
    <property type="match status" value="1"/>
</dbReference>
<dbReference type="SUPFAM" id="SSF53383">
    <property type="entry name" value="PLP-dependent transferases"/>
    <property type="match status" value="1"/>
</dbReference>
<dbReference type="PROSITE" id="PS00600">
    <property type="entry name" value="AA_TRANSFER_CLASS_3"/>
    <property type="match status" value="1"/>
</dbReference>
<feature type="chain" id="PRO_0000243643" description="Glutamate-1-semialdehyde 2,1-aminomutase">
    <location>
        <begin position="1"/>
        <end position="429"/>
    </location>
</feature>
<feature type="modified residue" description="N6-(pyridoxal phosphate)lysine" evidence="1">
    <location>
        <position position="267"/>
    </location>
</feature>
<comment type="catalytic activity">
    <reaction evidence="1">
        <text>(S)-4-amino-5-oxopentanoate = 5-aminolevulinate</text>
        <dbReference type="Rhea" id="RHEA:14265"/>
        <dbReference type="ChEBI" id="CHEBI:57501"/>
        <dbReference type="ChEBI" id="CHEBI:356416"/>
        <dbReference type="EC" id="5.4.3.8"/>
    </reaction>
</comment>
<comment type="cofactor">
    <cofactor evidence="1">
        <name>pyridoxal 5'-phosphate</name>
        <dbReference type="ChEBI" id="CHEBI:597326"/>
    </cofactor>
</comment>
<comment type="pathway">
    <text evidence="1">Porphyrin-containing compound metabolism; protoporphyrin-IX biosynthesis; 5-aminolevulinate from L-glutamyl-tRNA(Glu): step 2/2.</text>
</comment>
<comment type="subunit">
    <text evidence="1">Homodimer.</text>
</comment>
<comment type="subcellular location">
    <subcellularLocation>
        <location evidence="1">Cytoplasm</location>
    </subcellularLocation>
</comment>
<comment type="similarity">
    <text evidence="1">Belongs to the class-III pyridoxal-phosphate-dependent aminotransferase family. HemL subfamily.</text>
</comment>
<gene>
    <name evidence="1" type="primary">hemL</name>
    <name type="ordered locus">XC_0892</name>
</gene>
<name>GSA_XANC8</name>